<accession>Q6WN34</accession>
<accession>A5PKU9</accession>
<accession>Q6WN30</accession>
<accession>Q6WN31</accession>
<accession>Q6WN32</accession>
<accession>Q7Z5J3</accession>
<sequence>MVPEVRVLSSLLGLALLWFPLDSHARARPDMFCLFHGKRYSPGESWHPYLEPQGLMYCLRCTCSEGAHVSCYRLHCPPVHCPQPVTEPQQCCPKCVEPHTPSGLRAPPKSCQHNGTMYQHGEIFSAHELFPSRLPNQCVLCSCTEGQIYCGLTTCPEPGCPAPLPLPDSCCQACKDEASEQSDEEDSVQSLHGVRHPQDPCSSDAGRKRGPGTPAPTGLSAPLSFIPRHFRPKGAGSTTVKIVLKEKHKKACVHGGKTYSHGEVWHPAFRAFGPLPCILCTCEDGRQDCQRVTCPTEYPCRHPEKVAGKCCKICPEDKADPGHSEISSTRCPKAPGRVLVHTSVSPSPDNLRRFALEHEASDLVEIYLWKLVKGIFHLTQIKKVRKQDFQKEAQHFRLLAGPHEGHWNVFLAQTLELKVTASPDKVTKT</sequence>
<gene>
    <name type="primary">CHRDL2</name>
    <name type="synonym">BNF1</name>
    <name type="synonym">CHL2</name>
    <name type="ORF">UNQ765/PRO1557</name>
</gene>
<keyword id="KW-0025">Alternative splicing</keyword>
<keyword id="KW-0891">Chondrogenesis</keyword>
<keyword id="KW-0963">Cytoplasm</keyword>
<keyword id="KW-0217">Developmental protein</keyword>
<keyword id="KW-0221">Differentiation</keyword>
<keyword id="KW-0903">Direct protein sequencing</keyword>
<keyword id="KW-0325">Glycoprotein</keyword>
<keyword id="KW-0892">Osteogenesis</keyword>
<keyword id="KW-0597">Phosphoprotein</keyword>
<keyword id="KW-1267">Proteomics identification</keyword>
<keyword id="KW-1185">Reference proteome</keyword>
<keyword id="KW-0677">Repeat</keyword>
<keyword id="KW-0964">Secreted</keyword>
<keyword id="KW-0732">Signal</keyword>
<comment type="function">
    <text evidence="1 4 6">May inhibit BMPs activity by blocking their interaction with their receptors. Has a negative regulator effect on the cartilage formation/regeneration from immature mesenchymal cells, by preventing or reducing the rate of matrix accumulation (By similarity). Implicated in tumor angiogenesis. May play a role during myoblast and osteoblast differentiation, and maturation.</text>
</comment>
<comment type="subunit">
    <text evidence="1 5 6">Interacts with GDF5 (By similarity). May interact with BMP2, BMP4, BMP5, BMP6, BMP7 and INHBA.</text>
</comment>
<comment type="interaction">
    <interactant intactId="EBI-12593838">
        <id>Q6WN34-2</id>
    </interactant>
    <interactant intactId="EBI-11524452">
        <id>Q8N9N5-2</id>
        <label>BANP</label>
    </interactant>
    <organismsDiffer>false</organismsDiffer>
    <experiments>3</experiments>
</comment>
<comment type="interaction">
    <interactant intactId="EBI-12593838">
        <id>Q6WN34-2</id>
    </interactant>
    <interactant intactId="EBI-947551">
        <id>Q9H2X0</id>
        <label>CHRD</label>
    </interactant>
    <organismsDiffer>false</organismsDiffer>
    <experiments>3</experiments>
</comment>
<comment type="interaction">
    <interactant intactId="EBI-12593838">
        <id>Q6WN34-2</id>
    </interactant>
    <interactant intactId="EBI-744099">
        <id>Q9H0I2</id>
        <label>ENKD1</label>
    </interactant>
    <organismsDiffer>false</organismsDiffer>
    <experiments>3</experiments>
</comment>
<comment type="interaction">
    <interactant intactId="EBI-12593838">
        <id>Q6WN34-2</id>
    </interactant>
    <interactant intactId="EBI-4397076">
        <id>P16930</id>
        <label>FAH</label>
    </interactant>
    <organismsDiffer>false</organismsDiffer>
    <experiments>3</experiments>
</comment>
<comment type="interaction">
    <interactant intactId="EBI-12593838">
        <id>Q6WN34-2</id>
    </interactant>
    <interactant intactId="EBI-6658203">
        <id>Q86YD7</id>
        <label>FAM90A1</label>
    </interactant>
    <organismsDiffer>false</organismsDiffer>
    <experiments>3</experiments>
</comment>
<comment type="interaction">
    <interactant intactId="EBI-12593838">
        <id>Q6WN34-2</id>
    </interactant>
    <interactant intactId="EBI-347538">
        <id>Q9Y4H4</id>
        <label>GPSM3</label>
    </interactant>
    <organismsDiffer>false</organismsDiffer>
    <experiments>3</experiments>
</comment>
<comment type="interaction">
    <interactant intactId="EBI-12593838">
        <id>Q6WN34-2</id>
    </interactant>
    <interactant intactId="EBI-740785">
        <id>P49639</id>
        <label>HOXA1</label>
    </interactant>
    <organismsDiffer>false</organismsDiffer>
    <experiments>3</experiments>
</comment>
<comment type="interaction">
    <interactant intactId="EBI-12593838">
        <id>Q6WN34-2</id>
    </interactant>
    <interactant intactId="EBI-726739">
        <id>Q9UPY8</id>
        <label>MAPRE3</label>
    </interactant>
    <organismsDiffer>false</organismsDiffer>
    <experiments>3</experiments>
</comment>
<comment type="interaction">
    <interactant intactId="EBI-12593838">
        <id>Q6WN34-2</id>
    </interactant>
    <interactant intactId="EBI-740446">
        <id>P32242</id>
        <label>OTX1</label>
    </interactant>
    <organismsDiffer>false</organismsDiffer>
    <experiments>3</experiments>
</comment>
<comment type="interaction">
    <interactant intactId="EBI-12593838">
        <id>Q6WN34-2</id>
    </interactant>
    <interactant intactId="EBI-79893">
        <id>Q92569</id>
        <label>PIK3R3</label>
    </interactant>
    <organismsDiffer>false</organismsDiffer>
    <experiments>3</experiments>
</comment>
<comment type="interaction">
    <interactant intactId="EBI-12593838">
        <id>Q6WN34-2</id>
    </interactant>
    <interactant intactId="EBI-17236143">
        <id>Q12837</id>
        <label>POU4F2</label>
    </interactant>
    <organismsDiffer>false</organismsDiffer>
    <experiments>3</experiments>
</comment>
<comment type="interaction">
    <interactant intactId="EBI-12593838">
        <id>Q6WN34-2</id>
    </interactant>
    <interactant intactId="EBI-947791">
        <id>O75093</id>
        <label>SLIT1</label>
    </interactant>
    <organismsDiffer>false</organismsDiffer>
    <experiments>3</experiments>
</comment>
<comment type="interaction">
    <interactant intactId="EBI-12593838">
        <id>Q6WN34-2</id>
    </interactant>
    <interactant intactId="EBI-740727">
        <id>Q8TAU3</id>
        <label>ZNF417</label>
    </interactant>
    <organismsDiffer>false</organismsDiffer>
    <experiments>3</experiments>
</comment>
<comment type="interaction">
    <interactant intactId="EBI-12593838">
        <id>Q6WN34-2</id>
    </interactant>
    <interactant intactId="EBI-6427977">
        <id>Q96SQ5</id>
        <label>ZNF587</label>
    </interactant>
    <organismsDiffer>false</organismsDiffer>
    <experiments>3</experiments>
</comment>
<comment type="subcellular location">
    <molecule>Isoform 1</molecule>
    <subcellularLocation>
        <location evidence="13">Secreted</location>
    </subcellularLocation>
</comment>
<comment type="subcellular location">
    <molecule>Isoform 2</molecule>
    <subcellularLocation>
        <location evidence="13">Secreted</location>
    </subcellularLocation>
</comment>
<comment type="subcellular location">
    <molecule>Isoform 3</molecule>
    <subcellularLocation>
        <location evidence="13">Cytoplasm</location>
    </subcellularLocation>
</comment>
<comment type="subcellular location">
    <molecule>Isoform 4</molecule>
    <subcellularLocation>
        <location evidence="13">Cytoplasm</location>
    </subcellularLocation>
</comment>
<comment type="subcellular location">
    <molecule>Isoform 5</molecule>
    <subcellularLocation>
        <location evidence="13">Cytoplasm</location>
    </subcellularLocation>
</comment>
<comment type="alternative products">
    <event type="alternative splicing"/>
    <isoform>
        <id>Q6WN34-1</id>
        <name>1</name>
        <name>I</name>
        <sequence type="displayed"/>
    </isoform>
    <isoform>
        <id>Q6WN34-2</id>
        <name>2</name>
        <name>II</name>
        <sequence type="described" ref="VSP_013519"/>
    </isoform>
    <isoform>
        <id>Q6WN34-3</id>
        <name>3</name>
        <name>VII</name>
        <sequence type="described" ref="VSP_013512 VSP_013513 VSP_013514 VSP_013518"/>
    </isoform>
    <isoform>
        <id>Q6WN34-4</id>
        <name>4</name>
        <name>VIII</name>
        <sequence type="described" ref="VSP_013512 VSP_013513 VSP_013517 VSP_013518"/>
    </isoform>
    <isoform>
        <id>Q6WN34-5</id>
        <name>5</name>
        <name>IX</name>
        <sequence type="described" ref="VSP_013512 VSP_013513 VSP_013515 VSP_013516"/>
    </isoform>
    <text>Five additional mRNAs also exist. Differential expression of isoforms was observed during myoblast and osteoblast differentiation and maturation.</text>
</comment>
<comment type="tissue specificity">
    <text evidence="4 5 6">Highly expressed in uterus. Moderately expressed in heart, liver, prostate, testis and ovary. Weakly expressed in skeletal muscle, kidney, spleen, small intestine and colon. Expressed in the secretory epithelial cells of uterine endometrium, fallopian tubes, endocervical glands, bladder and prostate, as well as the transitional epithelium of the urinary bladder, and in bone osteoblasts (at protein level). In normal cartilage, expression was confined in a few chondrocytes in the superficial zone as well as in the middle zone. In diseased cartilage coming from osteoarthritic patients, expression was limited to the middle zone of chondrocytes. Isoform 1 and isoform 2 are expressed in fetal cerebellum and heart, while only isoform 2 is detected in fetal spleen. Isoform 2 present in plasma.</text>
</comment>
<comment type="induction">
    <text evidence="4">Up-regulated in breast tumors but also in lung and colon tumors.</text>
</comment>
<comment type="PTM">
    <text evidence="9">Phosphorylated by FAM20C in the extracellular medium.</text>
</comment>
<comment type="caution">
    <text evidence="13">According to PubMed:14660436, interacts with BMP2, BMP4, BMP5, BMP6, BMP7 but not INHBA. According to PubMed:15094188, interacts with INHBA but not BMP2, BMP4 and BMP6.</text>
</comment>
<name>CRDL2_HUMAN</name>
<protein>
    <recommendedName>
        <fullName>Chordin-like protein 2</fullName>
    </recommendedName>
    <alternativeName>
        <fullName>Breast tumor novel factor 1</fullName>
        <shortName>BNF-1</shortName>
    </alternativeName>
    <alternativeName>
        <fullName>Chordin-related protein 2</fullName>
    </alternativeName>
</protein>
<reference key="1">
    <citation type="journal article" date="2003" name="Gene">
        <title>BNF-1, a novel gene encoding a putative extracellular matrix protein, is overexpressed in tumor tissues.</title>
        <authorList>
            <person name="Wu I."/>
            <person name="Moses M.A."/>
        </authorList>
    </citation>
    <scope>NUCLEOTIDE SEQUENCE [MRNA] (ISOFORM 2)</scope>
    <scope>FUNCTION</scope>
    <scope>TISSUE SPECIFICITY</scope>
    <scope>INDUCTION</scope>
</reference>
<reference key="2">
    <citation type="journal article" date="2004" name="Gene">
        <title>hCHL2, a novel chordin-related gene, displays differential expression and complex alternative splicing in human tissues and during myoblast and osteoblast maturation.</title>
        <authorList>
            <person name="Oren A."/>
            <person name="Toporik A."/>
            <person name="Biton S."/>
            <person name="Almogy N."/>
            <person name="Eshel D."/>
            <person name="Bernstein J."/>
            <person name="Savitsky K."/>
            <person name="Rotman G."/>
        </authorList>
    </citation>
    <scope>NUCLEOTIDE SEQUENCE [MRNA] (ISOFORMS 1; 2; 3; 4 AND 5)</scope>
    <scope>FUNCTION</scope>
    <scope>INTERACTION WITH BMPS</scope>
    <scope>SUBCELLULAR LOCATION</scope>
    <scope>TISSUE SPECIFICITY</scope>
    <scope>ALTERNATIVE SPLICING</scope>
</reference>
<reference key="3">
    <citation type="journal article" date="2004" name="Development">
        <title>A novel chordin-like BMP inhibitor, CHL2, expressed preferentially in chondrocytes of developing cartilage and osteoarthritic joint cartilage.</title>
        <authorList>
            <person name="Nakayama N."/>
            <person name="Han C.-Y.E."/>
            <person name="Cam L."/>
            <person name="Lee J.I."/>
            <person name="Pretorius J."/>
            <person name="Fisher S."/>
            <person name="Rosenfeld R."/>
            <person name="Scully S."/>
            <person name="Nishinakamura R."/>
            <person name="Duryea D."/>
            <person name="Van G."/>
            <person name="Bolon B."/>
            <person name="Yokota T."/>
            <person name="Zhang K."/>
        </authorList>
    </citation>
    <scope>NUCLEOTIDE SEQUENCE [MRNA] (ISOFORM 1)</scope>
    <scope>TISSUE SPECIFICITY</scope>
    <scope>INTERACTION WITH BMPS</scope>
</reference>
<reference key="4">
    <citation type="journal article" date="2003" name="Genome Res.">
        <title>The secreted protein discovery initiative (SPDI), a large-scale effort to identify novel human secreted and transmembrane proteins: a bioinformatics assessment.</title>
        <authorList>
            <person name="Clark H.F."/>
            <person name="Gurney A.L."/>
            <person name="Abaya E."/>
            <person name="Baker K."/>
            <person name="Baldwin D.T."/>
            <person name="Brush J."/>
            <person name="Chen J."/>
            <person name="Chow B."/>
            <person name="Chui C."/>
            <person name="Crowley C."/>
            <person name="Currell B."/>
            <person name="Deuel B."/>
            <person name="Dowd P."/>
            <person name="Eaton D."/>
            <person name="Foster J.S."/>
            <person name="Grimaldi C."/>
            <person name="Gu Q."/>
            <person name="Hass P.E."/>
            <person name="Heldens S."/>
            <person name="Huang A."/>
            <person name="Kim H.S."/>
            <person name="Klimowski L."/>
            <person name="Jin Y."/>
            <person name="Johnson S."/>
            <person name="Lee J."/>
            <person name="Lewis L."/>
            <person name="Liao D."/>
            <person name="Mark M.R."/>
            <person name="Robbie E."/>
            <person name="Sanchez C."/>
            <person name="Schoenfeld J."/>
            <person name="Seshagiri S."/>
            <person name="Simmons L."/>
            <person name="Singh J."/>
            <person name="Smith V."/>
            <person name="Stinson J."/>
            <person name="Vagts A."/>
            <person name="Vandlen R.L."/>
            <person name="Watanabe C."/>
            <person name="Wieand D."/>
            <person name="Woods K."/>
            <person name="Xie M.-H."/>
            <person name="Yansura D.G."/>
            <person name="Yi S."/>
            <person name="Yu G."/>
            <person name="Yuan J."/>
            <person name="Zhang M."/>
            <person name="Zhang Z."/>
            <person name="Goddard A.D."/>
            <person name="Wood W.I."/>
            <person name="Godowski P.J."/>
            <person name="Gray A.M."/>
        </authorList>
    </citation>
    <scope>NUCLEOTIDE SEQUENCE [LARGE SCALE MRNA] (ISOFORM 2)</scope>
</reference>
<reference key="5">
    <citation type="journal article" date="2004" name="Genome Res.">
        <title>The status, quality, and expansion of the NIH full-length cDNA project: the Mammalian Gene Collection (MGC).</title>
        <authorList>
            <consortium name="The MGC Project Team"/>
        </authorList>
    </citation>
    <scope>NUCLEOTIDE SEQUENCE [LARGE SCALE MRNA] (ISOFORM 1)</scope>
</reference>
<reference key="6">
    <citation type="journal article" date="2004" name="Protein Sci.">
        <title>Signal peptide prediction based on analysis of experimentally verified cleavage sites.</title>
        <authorList>
            <person name="Zhang Z."/>
            <person name="Henzel W.J."/>
        </authorList>
    </citation>
    <scope>PROTEIN SEQUENCE OF 26-40</scope>
</reference>
<reference key="7">
    <citation type="journal article" date="2008" name="Proteomics">
        <title>Identification of N-linked glycoproteins in human milk by hydrophilic interaction liquid chromatography and mass spectrometry.</title>
        <authorList>
            <person name="Picariello G."/>
            <person name="Ferranti P."/>
            <person name="Mamone G."/>
            <person name="Roepstorff P."/>
            <person name="Addeo F."/>
        </authorList>
    </citation>
    <scope>GLYCOSYLATION [LARGE SCALE ANALYSIS] AT ASN-114</scope>
    <source>
        <tissue>Milk</tissue>
    </source>
</reference>
<reference key="8">
    <citation type="journal article" date="2015" name="Cell">
        <title>A single kinase generates the majority of the secreted phosphoproteome.</title>
        <authorList>
            <person name="Tagliabracci V.S."/>
            <person name="Wiley S.E."/>
            <person name="Guo X."/>
            <person name="Kinch L.N."/>
            <person name="Durrant E."/>
            <person name="Wen J."/>
            <person name="Xiao J."/>
            <person name="Cui J."/>
            <person name="Nguyen K.B."/>
            <person name="Engel J.L."/>
            <person name="Coon J.J."/>
            <person name="Grishin N."/>
            <person name="Pinna L.A."/>
            <person name="Pagliarini D.J."/>
            <person name="Dixon J.E."/>
        </authorList>
    </citation>
    <scope>PHOSPHORYLATION AT SER-182</scope>
</reference>
<organism>
    <name type="scientific">Homo sapiens</name>
    <name type="common">Human</name>
    <dbReference type="NCBI Taxonomy" id="9606"/>
    <lineage>
        <taxon>Eukaryota</taxon>
        <taxon>Metazoa</taxon>
        <taxon>Chordata</taxon>
        <taxon>Craniata</taxon>
        <taxon>Vertebrata</taxon>
        <taxon>Euteleostomi</taxon>
        <taxon>Mammalia</taxon>
        <taxon>Eutheria</taxon>
        <taxon>Euarchontoglires</taxon>
        <taxon>Primates</taxon>
        <taxon>Haplorrhini</taxon>
        <taxon>Catarrhini</taxon>
        <taxon>Hominidae</taxon>
        <taxon>Homo</taxon>
    </lineage>
</organism>
<evidence type="ECO:0000250" key="1"/>
<evidence type="ECO:0000255" key="2">
    <source>
        <dbReference type="PROSITE-ProRule" id="PRU00220"/>
    </source>
</evidence>
<evidence type="ECO:0000256" key="3">
    <source>
        <dbReference type="SAM" id="MobiDB-lite"/>
    </source>
</evidence>
<evidence type="ECO:0000269" key="4">
    <source>
    </source>
</evidence>
<evidence type="ECO:0000269" key="5">
    <source>
    </source>
</evidence>
<evidence type="ECO:0000269" key="6">
    <source>
    </source>
</evidence>
<evidence type="ECO:0000269" key="7">
    <source>
    </source>
</evidence>
<evidence type="ECO:0000269" key="8">
    <source>
    </source>
</evidence>
<evidence type="ECO:0000269" key="9">
    <source>
    </source>
</evidence>
<evidence type="ECO:0000303" key="10">
    <source>
    </source>
</evidence>
<evidence type="ECO:0000303" key="11">
    <source>
    </source>
</evidence>
<evidence type="ECO:0000303" key="12">
    <source>
    </source>
</evidence>
<evidence type="ECO:0000305" key="13"/>
<feature type="signal peptide" evidence="7">
    <location>
        <begin position="1"/>
        <end position="25"/>
    </location>
</feature>
<feature type="chain" id="PRO_0000005371" description="Chordin-like protein 2">
    <location>
        <begin position="26"/>
        <end position="429"/>
    </location>
</feature>
<feature type="domain" description="VWFC 1" evidence="2">
    <location>
        <begin position="31"/>
        <end position="96"/>
    </location>
</feature>
<feature type="domain" description="VWFC 2" evidence="2">
    <location>
        <begin position="109"/>
        <end position="175"/>
    </location>
</feature>
<feature type="domain" description="VWFC 3" evidence="2">
    <location>
        <begin position="250"/>
        <end position="315"/>
    </location>
</feature>
<feature type="region of interest" description="Disordered" evidence="3">
    <location>
        <begin position="182"/>
        <end position="224"/>
    </location>
</feature>
<feature type="modified residue" description="Phosphoserine; by FAM20C" evidence="9">
    <location>
        <position position="182"/>
    </location>
</feature>
<feature type="glycosylation site" description="N-linked (GlcNAc...) asparagine" evidence="8">
    <location>
        <position position="114"/>
    </location>
</feature>
<feature type="splice variant" id="VSP_013512" description="In isoform 3, isoform 4 and isoform 5." evidence="12">
    <location>
        <begin position="1"/>
        <end position="20"/>
    </location>
</feature>
<feature type="splice variant" id="VSP_013513" description="In isoform 3, isoform 4 and isoform 5." evidence="12">
    <original>LDSHARAR</original>
    <variation>MALVGLPG</variation>
    <location>
        <begin position="21"/>
        <end position="28"/>
    </location>
</feature>
<feature type="splice variant" id="VSP_013514" description="In isoform 3." evidence="12">
    <original>GAHVSCYRLHCPPVHCPQPVTEPQQCCPKCVEPHTPSGLRAPPKSCQHNGTMYQHGEIFSAHELFPSRLPNQCVLCSCTEGQIYCGLTTCPEPGCPA</original>
    <variation>NLTLPLDSGPHQSPASTTGPCTNTERSSVPMSCSPPACPTSVSSAAAQRARSTAASQPAPNQAAQHPSRCQTPAAKPAKMRQVSNRMKRTVCSRSMG</variation>
    <location>
        <begin position="66"/>
        <end position="162"/>
    </location>
</feature>
<feature type="splice variant" id="VSP_013515" description="In isoform 5." evidence="12">
    <original>GAHVSCYRLHCPPVHCPQPVTEPQQCCPKCVEPHTPSGLRAPPKSCQH</original>
    <variation>NLTLPLDSGPHQSPASTTGPCTNTERSSVPMSCSPPACPTSVSSAAAQ</variation>
    <location>
        <begin position="66"/>
        <end position="113"/>
    </location>
</feature>
<feature type="splice variant" id="VSP_013516" description="In isoform 5." evidence="12">
    <location>
        <begin position="114"/>
        <end position="429"/>
    </location>
</feature>
<feature type="splice variant" id="VSP_013517" description="In isoform 4." evidence="12">
    <original>EGQIYCGLTTCPEPGCPA</original>
    <variation>MRQVSNRMKRTVCSRSMG</variation>
    <location>
        <begin position="145"/>
        <end position="162"/>
    </location>
</feature>
<feature type="splice variant" id="VSP_013518" description="In isoform 3 and isoform 4." evidence="12">
    <location>
        <begin position="163"/>
        <end position="429"/>
    </location>
</feature>
<feature type="splice variant" id="VSP_013519" description="In isoform 2." evidence="10 11 12">
    <original>GIFHLTQIKKVRKQDFQKEAQHFRLLAGPHEGHWNVFLAQTLELKVTASPDKV</original>
    <variation>DEETEAQRGEVPGPRPHSQNLPLDSDQESQEARLPERGTALPTARWPPRRSLERLPSPDPGAEGHGQSRQSDQDI</variation>
    <location>
        <begin position="374"/>
        <end position="426"/>
    </location>
</feature>
<feature type="sequence variant" id="VAR_055651" description="In dbSNP:rs35903991.">
    <original>P</original>
    <variation>L</variation>
    <location>
        <position position="335"/>
    </location>
</feature>
<feature type="sequence conflict" description="In Ref. 2; AX140199." evidence="13" ref="2">
    <original>S</original>
    <variation>R</variation>
    <location>
        <position position="187"/>
    </location>
</feature>
<feature type="sequence conflict" description="In Ref. 2; AX140199." evidence="13" ref="2">
    <original>R</original>
    <variation>I</variation>
    <location>
        <position position="231"/>
    </location>
</feature>
<dbReference type="EMBL" id="AY163868">
    <property type="protein sequence ID" value="AAO31809.1"/>
    <property type="molecule type" value="mRNA"/>
</dbReference>
<dbReference type="EMBL" id="AY279090">
    <property type="protein sequence ID" value="AAQ19179.1"/>
    <property type="molecule type" value="mRNA"/>
</dbReference>
<dbReference type="EMBL" id="AY279092">
    <property type="protein sequence ID" value="AAQ19181.1"/>
    <property type="molecule type" value="mRNA"/>
</dbReference>
<dbReference type="EMBL" id="AY279093">
    <property type="protein sequence ID" value="AAQ19182.1"/>
    <property type="molecule type" value="mRNA"/>
</dbReference>
<dbReference type="EMBL" id="AY279094">
    <property type="protein sequence ID" value="AAQ19183.1"/>
    <property type="molecule type" value="mRNA"/>
</dbReference>
<dbReference type="EMBL" id="AX140199">
    <property type="status" value="NOT_ANNOTATED_CDS"/>
    <property type="molecule type" value="mRNA"/>
</dbReference>
<dbReference type="EMBL" id="AY358522">
    <property type="protein sequence ID" value="AAQ88886.1"/>
    <property type="molecule type" value="mRNA"/>
</dbReference>
<dbReference type="EMBL" id="BC142623">
    <property type="protein sequence ID" value="AAI42624.1"/>
    <property type="molecule type" value="mRNA"/>
</dbReference>
<dbReference type="CCDS" id="CCDS60893.1">
    <molecule id="Q6WN34-1"/>
</dbReference>
<dbReference type="CCDS" id="CCDS8234.1">
    <molecule id="Q6WN34-2"/>
</dbReference>
<dbReference type="RefSeq" id="NP_001265402.1">
    <molecule id="Q6WN34-1"/>
    <property type="nucleotide sequence ID" value="NM_001278473.3"/>
</dbReference>
<dbReference type="RefSeq" id="NP_001291319.1">
    <property type="nucleotide sequence ID" value="NM_001304390.1"/>
</dbReference>
<dbReference type="RefSeq" id="NP_001291320.1">
    <property type="nucleotide sequence ID" value="NM_001304391.1"/>
</dbReference>
<dbReference type="RefSeq" id="NP_001291344.1">
    <property type="nucleotide sequence ID" value="NM_001304415.1"/>
</dbReference>
<dbReference type="RefSeq" id="NP_001291345.1">
    <property type="nucleotide sequence ID" value="NM_001304416.1"/>
</dbReference>
<dbReference type="RefSeq" id="NP_001291346.1">
    <property type="nucleotide sequence ID" value="NM_001304417.1"/>
</dbReference>
<dbReference type="RefSeq" id="NP_056239.3">
    <molecule id="Q6WN34-2"/>
    <property type="nucleotide sequence ID" value="NM_015424.5"/>
</dbReference>
<dbReference type="SMR" id="Q6WN34"/>
<dbReference type="BioGRID" id="117395">
    <property type="interactions" value="114"/>
</dbReference>
<dbReference type="CORUM" id="Q6WN34"/>
<dbReference type="FunCoup" id="Q6WN34">
    <property type="interactions" value="252"/>
</dbReference>
<dbReference type="IntAct" id="Q6WN34">
    <property type="interactions" value="33"/>
</dbReference>
<dbReference type="STRING" id="9606.ENSP00000263671"/>
<dbReference type="GlyConnect" id="2935">
    <property type="glycosylation" value="23 N-Linked glycans (1 site)"/>
</dbReference>
<dbReference type="GlyCosmos" id="Q6WN34">
    <property type="glycosylation" value="2 sites, 28 glycans"/>
</dbReference>
<dbReference type="GlyGen" id="Q6WN34">
    <property type="glycosylation" value="8 sites, 27 N-linked glycans (1 site), 2 O-linked glycans (7 sites)"/>
</dbReference>
<dbReference type="iPTMnet" id="Q6WN34"/>
<dbReference type="PhosphoSitePlus" id="Q6WN34"/>
<dbReference type="BioMuta" id="CHRDL2"/>
<dbReference type="DMDM" id="62900089"/>
<dbReference type="jPOST" id="Q6WN34"/>
<dbReference type="MassIVE" id="Q6WN34"/>
<dbReference type="PaxDb" id="9606-ENSP00000263671"/>
<dbReference type="PeptideAtlas" id="Q6WN34"/>
<dbReference type="ProteomicsDB" id="67768">
    <molecule id="Q6WN34-1"/>
</dbReference>
<dbReference type="ProteomicsDB" id="67769">
    <molecule id="Q6WN34-2"/>
</dbReference>
<dbReference type="ProteomicsDB" id="67770">
    <molecule id="Q6WN34-3"/>
</dbReference>
<dbReference type="ProteomicsDB" id="67771">
    <molecule id="Q6WN34-4"/>
</dbReference>
<dbReference type="ProteomicsDB" id="67772">
    <molecule id="Q6WN34-5"/>
</dbReference>
<dbReference type="Antibodypedia" id="17275">
    <property type="antibodies" value="153 antibodies from 22 providers"/>
</dbReference>
<dbReference type="DNASU" id="25884"/>
<dbReference type="Ensembl" id="ENST00000263671.9">
    <molecule id="Q6WN34-2"/>
    <property type="protein sequence ID" value="ENSP00000263671.5"/>
    <property type="gene ID" value="ENSG00000054938.17"/>
</dbReference>
<dbReference type="Ensembl" id="ENST00000376332.8">
    <molecule id="Q6WN34-1"/>
    <property type="protein sequence ID" value="ENSP00000365510.3"/>
    <property type="gene ID" value="ENSG00000054938.17"/>
</dbReference>
<dbReference type="Ensembl" id="ENST00000528471.1">
    <molecule id="Q6WN34-5"/>
    <property type="protein sequence ID" value="ENSP00000434589.1"/>
    <property type="gene ID" value="ENSG00000054938.17"/>
</dbReference>
<dbReference type="Ensembl" id="ENST00000534276.5">
    <molecule id="Q6WN34-4"/>
    <property type="protein sequence ID" value="ENSP00000432055.1"/>
    <property type="gene ID" value="ENSG00000054938.17"/>
</dbReference>
<dbReference type="GeneID" id="25884"/>
<dbReference type="KEGG" id="hsa:25884"/>
<dbReference type="MANE-Select" id="ENST00000376332.8">
    <property type="protein sequence ID" value="ENSP00000365510.3"/>
    <property type="RefSeq nucleotide sequence ID" value="NM_001278473.3"/>
    <property type="RefSeq protein sequence ID" value="NP_001265402.1"/>
</dbReference>
<dbReference type="UCSC" id="uc001ovh.5">
    <molecule id="Q6WN34-1"/>
    <property type="organism name" value="human"/>
</dbReference>
<dbReference type="AGR" id="HGNC:24168"/>
<dbReference type="CTD" id="25884"/>
<dbReference type="DisGeNET" id="25884"/>
<dbReference type="GeneCards" id="CHRDL2"/>
<dbReference type="HGNC" id="HGNC:24168">
    <property type="gene designation" value="CHRDL2"/>
</dbReference>
<dbReference type="HPA" id="ENSG00000054938">
    <property type="expression patterns" value="Tissue enhanced (endometrium, gallbladder, lymphoid tissue, smooth muscle)"/>
</dbReference>
<dbReference type="MIM" id="613127">
    <property type="type" value="gene"/>
</dbReference>
<dbReference type="neXtProt" id="NX_Q6WN34"/>
<dbReference type="OpenTargets" id="ENSG00000054938"/>
<dbReference type="PharmGKB" id="PA134883081"/>
<dbReference type="VEuPathDB" id="HostDB:ENSG00000054938"/>
<dbReference type="GeneTree" id="ENSGT00940000161241"/>
<dbReference type="HOGENOM" id="CLU_048288_1_1_1"/>
<dbReference type="InParanoid" id="Q6WN34"/>
<dbReference type="OMA" id="HGKRYAP"/>
<dbReference type="OrthoDB" id="8173378at2759"/>
<dbReference type="PAN-GO" id="Q6WN34">
    <property type="GO annotations" value="3 GO annotations based on evolutionary models"/>
</dbReference>
<dbReference type="PhylomeDB" id="Q6WN34"/>
<dbReference type="TreeFam" id="TF106451"/>
<dbReference type="PathwayCommons" id="Q6WN34"/>
<dbReference type="SignaLink" id="Q6WN34"/>
<dbReference type="BioGRID-ORCS" id="25884">
    <property type="hits" value="16 hits in 1148 CRISPR screens"/>
</dbReference>
<dbReference type="ChiTaRS" id="CHRDL2">
    <property type="organism name" value="human"/>
</dbReference>
<dbReference type="GenomeRNAi" id="25884"/>
<dbReference type="Pharos" id="Q6WN34">
    <property type="development level" value="Tbio"/>
</dbReference>
<dbReference type="PRO" id="PR:Q6WN34"/>
<dbReference type="Proteomes" id="UP000005640">
    <property type="component" value="Chromosome 11"/>
</dbReference>
<dbReference type="RNAct" id="Q6WN34">
    <property type="molecule type" value="protein"/>
</dbReference>
<dbReference type="Bgee" id="ENSG00000054938">
    <property type="expression patterns" value="Expressed in smooth muscle tissue and 106 other cell types or tissues"/>
</dbReference>
<dbReference type="ExpressionAtlas" id="Q6WN34">
    <property type="expression patterns" value="baseline and differential"/>
</dbReference>
<dbReference type="GO" id="GO:0005737">
    <property type="term" value="C:cytoplasm"/>
    <property type="evidence" value="ECO:0007669"/>
    <property type="project" value="UniProtKB-SubCell"/>
</dbReference>
<dbReference type="GO" id="GO:0005615">
    <property type="term" value="C:extracellular space"/>
    <property type="evidence" value="ECO:0007005"/>
    <property type="project" value="UniProtKB"/>
</dbReference>
<dbReference type="GO" id="GO:0036122">
    <property type="term" value="F:BMP binding"/>
    <property type="evidence" value="ECO:0000318"/>
    <property type="project" value="GO_Central"/>
</dbReference>
<dbReference type="GO" id="GO:0051216">
    <property type="term" value="P:cartilage development"/>
    <property type="evidence" value="ECO:0007669"/>
    <property type="project" value="UniProtKB-KW"/>
</dbReference>
<dbReference type="GO" id="GO:0030154">
    <property type="term" value="P:cell differentiation"/>
    <property type="evidence" value="ECO:0000318"/>
    <property type="project" value="GO_Central"/>
</dbReference>
<dbReference type="GO" id="GO:0030514">
    <property type="term" value="P:negative regulation of BMP signaling pathway"/>
    <property type="evidence" value="ECO:0000318"/>
    <property type="project" value="GO_Central"/>
</dbReference>
<dbReference type="GO" id="GO:0001503">
    <property type="term" value="P:ossification"/>
    <property type="evidence" value="ECO:0007669"/>
    <property type="project" value="UniProtKB-KW"/>
</dbReference>
<dbReference type="FunFam" id="2.10.70.10:FF:000005">
    <property type="entry name" value="Chordin-like 1, isoform CRA_c"/>
    <property type="match status" value="2"/>
</dbReference>
<dbReference type="Gene3D" id="6.20.200.20">
    <property type="match status" value="1"/>
</dbReference>
<dbReference type="Gene3D" id="2.10.70.10">
    <property type="entry name" value="Complement Module, domain 1"/>
    <property type="match status" value="2"/>
</dbReference>
<dbReference type="InterPro" id="IPR045717">
    <property type="entry name" value="CHRDL1/2"/>
</dbReference>
<dbReference type="InterPro" id="IPR045716">
    <property type="entry name" value="CHRDL_1/2_C"/>
</dbReference>
<dbReference type="InterPro" id="IPR001007">
    <property type="entry name" value="VWF_dom"/>
</dbReference>
<dbReference type="PANTHER" id="PTHR46303:SF3">
    <property type="entry name" value="CHORDIN-LIKE PROTEIN 2"/>
    <property type="match status" value="1"/>
</dbReference>
<dbReference type="PANTHER" id="PTHR46303">
    <property type="entry name" value="VWFC DOMAIN-CONTAINING PROTEIN"/>
    <property type="match status" value="1"/>
</dbReference>
<dbReference type="Pfam" id="PF19548">
    <property type="entry name" value="CHRDL_1_2_C"/>
    <property type="match status" value="1"/>
</dbReference>
<dbReference type="Pfam" id="PF00093">
    <property type="entry name" value="VWC"/>
    <property type="match status" value="3"/>
</dbReference>
<dbReference type="SMART" id="SM00214">
    <property type="entry name" value="VWC"/>
    <property type="match status" value="3"/>
</dbReference>
<dbReference type="SUPFAM" id="SSF57603">
    <property type="entry name" value="FnI-like domain"/>
    <property type="match status" value="3"/>
</dbReference>
<dbReference type="PROSITE" id="PS01208">
    <property type="entry name" value="VWFC_1"/>
    <property type="match status" value="3"/>
</dbReference>
<dbReference type="PROSITE" id="PS50184">
    <property type="entry name" value="VWFC_2"/>
    <property type="match status" value="3"/>
</dbReference>
<proteinExistence type="evidence at protein level"/>